<feature type="chain" id="PRO_0000170317" description="Putative reactive intermediate deaminase TdcF">
    <location>
        <begin position="1"/>
        <end position="129"/>
    </location>
</feature>
<feature type="binding site" evidence="1">
    <location>
        <begin position="105"/>
        <end position="107"/>
    </location>
    <ligand>
        <name>substrate</name>
    </ligand>
</feature>
<feature type="binding site" evidence="1">
    <location>
        <position position="120"/>
    </location>
    <ligand>
        <name>substrate</name>
    </ligand>
</feature>
<feature type="modified residue" description="N6-(pyridoxal phosphate)lysine" evidence="1">
    <location>
        <position position="58"/>
    </location>
</feature>
<protein>
    <recommendedName>
        <fullName>Putative reactive intermediate deaminase TdcF</fullName>
        <ecNumber>3.5.4.-</ecNumber>
    </recommendedName>
</protein>
<evidence type="ECO:0000250" key="1"/>
<evidence type="ECO:0000305" key="2"/>
<proteinExistence type="inferred from homology"/>
<dbReference type="EC" id="3.5.4.-"/>
<dbReference type="EMBL" id="AE014075">
    <property type="protein sequence ID" value="AAN82312.1"/>
    <property type="status" value="ALT_INIT"/>
    <property type="molecule type" value="Genomic_DNA"/>
</dbReference>
<dbReference type="RefSeq" id="WP_000719990.1">
    <property type="nucleotide sequence ID" value="NZ_CP051263.1"/>
</dbReference>
<dbReference type="SMR" id="P0AGL3"/>
<dbReference type="STRING" id="199310.c3871"/>
<dbReference type="KEGG" id="ecc:c3871"/>
<dbReference type="eggNOG" id="COG0251">
    <property type="taxonomic scope" value="Bacteria"/>
</dbReference>
<dbReference type="HOGENOM" id="CLU_100715_7_1_6"/>
<dbReference type="UniPathway" id="UPA00052"/>
<dbReference type="Proteomes" id="UP000001410">
    <property type="component" value="Chromosome"/>
</dbReference>
<dbReference type="GO" id="GO:0005829">
    <property type="term" value="C:cytosol"/>
    <property type="evidence" value="ECO:0007669"/>
    <property type="project" value="TreeGrafter"/>
</dbReference>
<dbReference type="GO" id="GO:0019239">
    <property type="term" value="F:deaminase activity"/>
    <property type="evidence" value="ECO:0007669"/>
    <property type="project" value="TreeGrafter"/>
</dbReference>
<dbReference type="GO" id="GO:0070689">
    <property type="term" value="P:L-threonine catabolic process to propionate"/>
    <property type="evidence" value="ECO:0007669"/>
    <property type="project" value="UniProtKB-UniPathway"/>
</dbReference>
<dbReference type="GO" id="GO:0006566">
    <property type="term" value="P:threonine metabolic process"/>
    <property type="evidence" value="ECO:0000250"/>
    <property type="project" value="UniProtKB"/>
</dbReference>
<dbReference type="CDD" id="cd00448">
    <property type="entry name" value="YjgF_YER057c_UK114_family"/>
    <property type="match status" value="1"/>
</dbReference>
<dbReference type="FunFam" id="3.30.1330.40:FF:000001">
    <property type="entry name" value="L-PSP family endoribonuclease"/>
    <property type="match status" value="1"/>
</dbReference>
<dbReference type="Gene3D" id="3.30.1330.40">
    <property type="entry name" value="RutC-like"/>
    <property type="match status" value="1"/>
</dbReference>
<dbReference type="InterPro" id="IPR006056">
    <property type="entry name" value="RidA"/>
</dbReference>
<dbReference type="InterPro" id="IPR019897">
    <property type="entry name" value="RidA_CS"/>
</dbReference>
<dbReference type="InterPro" id="IPR035959">
    <property type="entry name" value="RutC-like_sf"/>
</dbReference>
<dbReference type="InterPro" id="IPR006175">
    <property type="entry name" value="YjgF/YER057c/UK114"/>
</dbReference>
<dbReference type="NCBIfam" id="NF008490">
    <property type="entry name" value="PRK11401.1"/>
    <property type="match status" value="1"/>
</dbReference>
<dbReference type="NCBIfam" id="TIGR00004">
    <property type="entry name" value="Rid family detoxifying hydrolase"/>
    <property type="match status" value="1"/>
</dbReference>
<dbReference type="PANTHER" id="PTHR11803">
    <property type="entry name" value="2-IMINOBUTANOATE/2-IMINOPROPANOATE DEAMINASE RIDA"/>
    <property type="match status" value="1"/>
</dbReference>
<dbReference type="PANTHER" id="PTHR11803:SF39">
    <property type="entry name" value="2-IMINOBUTANOATE_2-IMINOPROPANOATE DEAMINASE"/>
    <property type="match status" value="1"/>
</dbReference>
<dbReference type="Pfam" id="PF01042">
    <property type="entry name" value="Ribonuc_L-PSP"/>
    <property type="match status" value="1"/>
</dbReference>
<dbReference type="SUPFAM" id="SSF55298">
    <property type="entry name" value="YjgF-like"/>
    <property type="match status" value="1"/>
</dbReference>
<dbReference type="PROSITE" id="PS01094">
    <property type="entry name" value="UPF0076"/>
    <property type="match status" value="1"/>
</dbReference>
<comment type="function">
    <text evidence="1">May be a post-translational regulator that controls the metabolic fate of L-threonine or the potentially toxic intermediate 2-ketobutyrate.</text>
</comment>
<comment type="pathway">
    <text>Amino-acid degradation; L-threonine degradation via propanoate pathway.</text>
</comment>
<comment type="subunit">
    <text evidence="1">Homotrimer.</text>
</comment>
<comment type="similarity">
    <text evidence="2">Belongs to the RutC family.</text>
</comment>
<comment type="sequence caution" evidence="2">
    <conflict type="erroneous initiation">
        <sequence resource="EMBL-CDS" id="AAN82312"/>
    </conflict>
    <text>Extended N-terminus.</text>
</comment>
<keyword id="KW-0378">Hydrolase</keyword>
<keyword id="KW-0663">Pyridoxal phosphate</keyword>
<keyword id="KW-1185">Reference proteome</keyword>
<accession>P0AGL3</accession>
<accession>P42631</accession>
<sequence length="129" mass="14007">MKKIIETQRAPGAIGPYVQGVDLGSMVFTSGQIPVCPQTGEIPADVQDQARLSLENVKAIVVAAGLSVGDIIKMTVFITDLNDFATINEVYKQFFDEHQATYPTRSCVQVARLPKDVKLEIEAIAVRSA</sequence>
<organism>
    <name type="scientific">Escherichia coli O6:H1 (strain CFT073 / ATCC 700928 / UPEC)</name>
    <dbReference type="NCBI Taxonomy" id="199310"/>
    <lineage>
        <taxon>Bacteria</taxon>
        <taxon>Pseudomonadati</taxon>
        <taxon>Pseudomonadota</taxon>
        <taxon>Gammaproteobacteria</taxon>
        <taxon>Enterobacterales</taxon>
        <taxon>Enterobacteriaceae</taxon>
        <taxon>Escherichia</taxon>
    </lineage>
</organism>
<gene>
    <name type="primary">tdcF</name>
    <name type="ordered locus">c3871</name>
</gene>
<name>TDCF_ECOL6</name>
<reference key="1">
    <citation type="journal article" date="2002" name="Proc. Natl. Acad. Sci. U.S.A.">
        <title>Extensive mosaic structure revealed by the complete genome sequence of uropathogenic Escherichia coli.</title>
        <authorList>
            <person name="Welch R.A."/>
            <person name="Burland V."/>
            <person name="Plunkett G. III"/>
            <person name="Redford P."/>
            <person name="Roesch P."/>
            <person name="Rasko D."/>
            <person name="Buckles E.L."/>
            <person name="Liou S.-R."/>
            <person name="Boutin A."/>
            <person name="Hackett J."/>
            <person name="Stroud D."/>
            <person name="Mayhew G.F."/>
            <person name="Rose D.J."/>
            <person name="Zhou S."/>
            <person name="Schwartz D.C."/>
            <person name="Perna N.T."/>
            <person name="Mobley H.L.T."/>
            <person name="Donnenberg M.S."/>
            <person name="Blattner F.R."/>
        </authorList>
    </citation>
    <scope>NUCLEOTIDE SEQUENCE [LARGE SCALE GENOMIC DNA]</scope>
    <source>
        <strain>CFT073 / ATCC 700928 / UPEC</strain>
    </source>
</reference>